<name>ASIP_FELCA</name>
<evidence type="ECO:0000250" key="1"/>
<evidence type="ECO:0000250" key="2">
    <source>
        <dbReference type="UniProtKB" id="P42127"/>
    </source>
</evidence>
<evidence type="ECO:0000250" key="3">
    <source>
        <dbReference type="UniProtKB" id="Q03288"/>
    </source>
</evidence>
<evidence type="ECO:0000255" key="4"/>
<evidence type="ECO:0000255" key="5">
    <source>
        <dbReference type="PROSITE-ProRule" id="PRU00494"/>
    </source>
</evidence>
<evidence type="ECO:0000256" key="6">
    <source>
        <dbReference type="SAM" id="MobiDB-lite"/>
    </source>
</evidence>
<comment type="function">
    <text evidence="3">Involved in the regulation of melanogenesis. The binding of ASP to MC1R precludes alpha-MSH initiated signaling and thus blocks production of cAMP, leading to a down-regulation of eumelanogenesis (brown/black pigment) and thus increasing synthesis of pheomelanin (yellow/red pigment) (By similarity).</text>
</comment>
<comment type="subcellular location">
    <subcellularLocation>
        <location evidence="2">Secreted</location>
    </subcellularLocation>
</comment>
<comment type="domain">
    <text evidence="1">The presence of a 'disulfide through disulfide knot' structurally defines this protein as a knottin.</text>
</comment>
<keyword id="KW-1015">Disulfide bond</keyword>
<keyword id="KW-0325">Glycoprotein</keyword>
<keyword id="KW-0960">Knottin</keyword>
<keyword id="KW-1185">Reference proteome</keyword>
<keyword id="KW-0964">Secreted</keyword>
<keyword id="KW-0732">Signal</keyword>
<sequence length="135" mass="14948">MNILRLLLATLLVCLCLLTAYSHLAPEEKPRDDRNLRSNSSMNMLDLSSVSIVALNKKSKKISRKEAEKKRSSKKKASMKNVAQPRRPRPPPPAPCVATRDSCKPPAPACCDPCASCQCRFFRSSCSCRVLNPTC</sequence>
<dbReference type="EMBL" id="AY237394">
    <property type="protein sequence ID" value="AAO62411.1"/>
    <property type="molecule type" value="Genomic_DNA"/>
</dbReference>
<dbReference type="RefSeq" id="NP_001009190.1">
    <property type="nucleotide sequence ID" value="NM_001009190.1"/>
</dbReference>
<dbReference type="RefSeq" id="XP_006929845.1">
    <property type="nucleotide sequence ID" value="XM_006929783.4"/>
</dbReference>
<dbReference type="RefSeq" id="XP_019681722.1">
    <property type="nucleotide sequence ID" value="XM_019826163.1"/>
</dbReference>
<dbReference type="RefSeq" id="XP_019681723.1">
    <property type="nucleotide sequence ID" value="XM_019826164.1"/>
</dbReference>
<dbReference type="RefSeq" id="XP_019681724.1">
    <property type="nucleotide sequence ID" value="XM_019826165.3"/>
</dbReference>
<dbReference type="RefSeq" id="XP_019681725.1">
    <property type="nucleotide sequence ID" value="XM_019826166.1"/>
</dbReference>
<dbReference type="RefSeq" id="XP_019681726.1">
    <property type="nucleotide sequence ID" value="XM_019826167.1"/>
</dbReference>
<dbReference type="RefSeq" id="XP_019681727.1">
    <property type="nucleotide sequence ID" value="XM_019826168.1"/>
</dbReference>
<dbReference type="RefSeq" id="XP_019681728.1">
    <property type="nucleotide sequence ID" value="XM_019826169.1"/>
</dbReference>
<dbReference type="RefSeq" id="XP_044909245.1">
    <property type="nucleotide sequence ID" value="XM_045053310.1"/>
</dbReference>
<dbReference type="RefSeq" id="XP_044909246.1">
    <property type="nucleotide sequence ID" value="XM_045053311.1"/>
</dbReference>
<dbReference type="RefSeq" id="XP_044909247.1">
    <property type="nucleotide sequence ID" value="XM_045053312.1"/>
</dbReference>
<dbReference type="RefSeq" id="XP_044909248.1">
    <property type="nucleotide sequence ID" value="XM_045053313.1"/>
</dbReference>
<dbReference type="RefSeq" id="XP_044909249.1">
    <property type="nucleotide sequence ID" value="XM_045053314.1"/>
</dbReference>
<dbReference type="RefSeq" id="XP_044909250.1">
    <property type="nucleotide sequence ID" value="XM_045053315.1"/>
</dbReference>
<dbReference type="FunCoup" id="Q865F0">
    <property type="interactions" value="4"/>
</dbReference>
<dbReference type="STRING" id="9685.ENSFCAP00000032069"/>
<dbReference type="GlyCosmos" id="Q865F0">
    <property type="glycosylation" value="1 site, No reported glycans"/>
</dbReference>
<dbReference type="PaxDb" id="9685-ENSFCAP00000010252"/>
<dbReference type="GeneID" id="492297"/>
<dbReference type="KEGG" id="fca:492297"/>
<dbReference type="CTD" id="434"/>
<dbReference type="eggNOG" id="ENOG502S5XF">
    <property type="taxonomic scope" value="Eukaryota"/>
</dbReference>
<dbReference type="HOGENOM" id="CLU_138633_0_0_1"/>
<dbReference type="InParanoid" id="Q865F0"/>
<dbReference type="OrthoDB" id="8717782at2759"/>
<dbReference type="TreeFam" id="TF330729"/>
<dbReference type="Proteomes" id="UP000011712">
    <property type="component" value="Unplaced"/>
</dbReference>
<dbReference type="GO" id="GO:0005615">
    <property type="term" value="C:extracellular space"/>
    <property type="evidence" value="ECO:0000250"/>
    <property type="project" value="UniProtKB"/>
</dbReference>
<dbReference type="GO" id="GO:0031779">
    <property type="term" value="F:melanocortin receptor binding"/>
    <property type="evidence" value="ECO:0000318"/>
    <property type="project" value="GO_Central"/>
</dbReference>
<dbReference type="GO" id="GO:0005184">
    <property type="term" value="F:neuropeptide hormone activity"/>
    <property type="evidence" value="ECO:0000318"/>
    <property type="project" value="GO_Central"/>
</dbReference>
<dbReference type="GO" id="GO:0009755">
    <property type="term" value="P:hormone-mediated signaling pathway"/>
    <property type="evidence" value="ECO:0007669"/>
    <property type="project" value="InterPro"/>
</dbReference>
<dbReference type="GO" id="GO:0042438">
    <property type="term" value="P:melanin biosynthetic process"/>
    <property type="evidence" value="ECO:0000250"/>
    <property type="project" value="UniProtKB"/>
</dbReference>
<dbReference type="GO" id="GO:0032438">
    <property type="term" value="P:melanosome organization"/>
    <property type="evidence" value="ECO:0000318"/>
    <property type="project" value="GO_Central"/>
</dbReference>
<dbReference type="Gene3D" id="4.10.760.10">
    <property type="entry name" value="Agouti domain"/>
    <property type="match status" value="1"/>
</dbReference>
<dbReference type="InterPro" id="IPR007733">
    <property type="entry name" value="Agouti"/>
</dbReference>
<dbReference type="InterPro" id="IPR027300">
    <property type="entry name" value="Agouti_dom"/>
</dbReference>
<dbReference type="InterPro" id="IPR036836">
    <property type="entry name" value="Agouti_dom_sf"/>
</dbReference>
<dbReference type="PANTHER" id="PTHR16551">
    <property type="entry name" value="AGOUTI RELATED"/>
    <property type="match status" value="1"/>
</dbReference>
<dbReference type="PANTHER" id="PTHR16551:SF1">
    <property type="entry name" value="AGOUTI-SIGNALING PROTEIN"/>
    <property type="match status" value="1"/>
</dbReference>
<dbReference type="Pfam" id="PF05039">
    <property type="entry name" value="Agouti"/>
    <property type="match status" value="1"/>
</dbReference>
<dbReference type="SMART" id="SM00792">
    <property type="entry name" value="Agouti"/>
    <property type="match status" value="1"/>
</dbReference>
<dbReference type="SUPFAM" id="SSF57055">
    <property type="entry name" value="Agouti-related protein"/>
    <property type="match status" value="1"/>
</dbReference>
<dbReference type="PROSITE" id="PS60024">
    <property type="entry name" value="AGOUTI_1"/>
    <property type="match status" value="1"/>
</dbReference>
<dbReference type="PROSITE" id="PS51150">
    <property type="entry name" value="AGOUTI_2"/>
    <property type="match status" value="1"/>
</dbReference>
<accession>Q865F0</accession>
<proteinExistence type="inferred from homology"/>
<protein>
    <recommendedName>
        <fullName>Agouti-signaling protein</fullName>
        <shortName>ASP</shortName>
    </recommendedName>
    <alternativeName>
        <fullName>Agouti switch protein</fullName>
    </alternativeName>
</protein>
<feature type="signal peptide" evidence="4">
    <location>
        <begin position="1"/>
        <end position="22"/>
    </location>
</feature>
<feature type="chain" id="PRO_0000001026" description="Agouti-signaling protein">
    <location>
        <begin position="23"/>
        <end position="135"/>
    </location>
</feature>
<feature type="domain" description="Agouti" evidence="5">
    <location>
        <begin position="96"/>
        <end position="135"/>
    </location>
</feature>
<feature type="region of interest" description="Disordered" evidence="6">
    <location>
        <begin position="56"/>
        <end position="101"/>
    </location>
</feature>
<feature type="glycosylation site" description="N-linked (GlcNAc...) asparagine" evidence="4">
    <location>
        <position position="39"/>
    </location>
</feature>
<feature type="disulfide bond" evidence="5">
    <location>
        <begin position="96"/>
        <end position="111"/>
    </location>
</feature>
<feature type="disulfide bond" evidence="5">
    <location>
        <begin position="103"/>
        <end position="117"/>
    </location>
</feature>
<feature type="disulfide bond" evidence="5">
    <location>
        <begin position="110"/>
        <end position="128"/>
    </location>
</feature>
<feature type="disulfide bond" evidence="5">
    <location>
        <begin position="114"/>
        <end position="135"/>
    </location>
</feature>
<feature type="disulfide bond" evidence="5">
    <location>
        <begin position="119"/>
        <end position="126"/>
    </location>
</feature>
<reference key="1">
    <citation type="journal article" date="2003" name="Curr. Biol.">
        <title>Molecular genetics and evolution of melanism in the cat family.</title>
        <authorList>
            <person name="Eizirik E."/>
            <person name="Yuhki N."/>
            <person name="Johnson W.E."/>
            <person name="Menotti-Raymond M."/>
            <person name="Hannah S.S."/>
            <person name="O'Brien S.J."/>
        </authorList>
    </citation>
    <scope>NUCLEOTIDE SEQUENCE [GENOMIC DNA]</scope>
    <source>
        <strain>Isolate Fca273</strain>
    </source>
</reference>
<organism>
    <name type="scientific">Felis catus</name>
    <name type="common">Cat</name>
    <name type="synonym">Felis silvestris catus</name>
    <dbReference type="NCBI Taxonomy" id="9685"/>
    <lineage>
        <taxon>Eukaryota</taxon>
        <taxon>Metazoa</taxon>
        <taxon>Chordata</taxon>
        <taxon>Craniata</taxon>
        <taxon>Vertebrata</taxon>
        <taxon>Euteleostomi</taxon>
        <taxon>Mammalia</taxon>
        <taxon>Eutheria</taxon>
        <taxon>Laurasiatheria</taxon>
        <taxon>Carnivora</taxon>
        <taxon>Feliformia</taxon>
        <taxon>Felidae</taxon>
        <taxon>Felinae</taxon>
        <taxon>Felis</taxon>
    </lineage>
</organism>
<gene>
    <name type="primary">ASIP</name>
</gene>